<gene>
    <name type="primary">H</name>
</gene>
<organism>
    <name type="scientific">Rinderpest virus (strain Kabete O)</name>
    <name type="common">RDV</name>
    <dbReference type="NCBI Taxonomy" id="11242"/>
    <lineage>
        <taxon>Viruses</taxon>
        <taxon>Riboviria</taxon>
        <taxon>Orthornavirae</taxon>
        <taxon>Negarnaviricota</taxon>
        <taxon>Haploviricotina</taxon>
        <taxon>Monjiviricetes</taxon>
        <taxon>Mononegavirales</taxon>
        <taxon>Paramyxoviridae</taxon>
        <taxon>Orthoparamyxovirinae</taxon>
        <taxon>Morbillivirus</taxon>
        <taxon>Morbillivirus pecoris</taxon>
        <taxon>Rinderpest morbillivirus</taxon>
    </lineage>
</organism>
<accession>P12567</accession>
<feature type="chain" id="PRO_0000142633" description="Hemagglutinin glycoprotein">
    <location>
        <begin position="1"/>
        <end position="609"/>
    </location>
</feature>
<feature type="topological domain" description="Intravirion" evidence="2">
    <location>
        <begin position="1"/>
        <end position="34"/>
    </location>
</feature>
<feature type="transmembrane region" description="Helical; Signal-anchor for type II membrane protein" evidence="2">
    <location>
        <begin position="35"/>
        <end position="58"/>
    </location>
</feature>
<feature type="topological domain" description="Virion surface" evidence="2">
    <location>
        <begin position="59"/>
        <end position="609"/>
    </location>
</feature>
<feature type="glycosylation site" description="N-linked (GlcNAc...) asparagine; by host" evidence="2">
    <location>
        <position position="168"/>
    </location>
</feature>
<feature type="glycosylation site" description="N-linked (GlcNAc...) asparagine; by host" evidence="2">
    <location>
        <position position="187"/>
    </location>
</feature>
<feature type="glycosylation site" description="N-linked (GlcNAc...) asparagine; by host" evidence="2">
    <location>
        <position position="200"/>
    </location>
</feature>
<feature type="glycosylation site" description="N-linked (GlcNAc...) asparagine; by host" evidence="2">
    <location>
        <position position="215"/>
    </location>
</feature>
<feature type="glycosylation site" description="N-linked (GlcNAc...) asparagine; by host" evidence="2">
    <location>
        <position position="395"/>
    </location>
</feature>
<proteinExistence type="inferred from homology"/>
<evidence type="ECO:0000250" key="1"/>
<evidence type="ECO:0000255" key="2"/>
<evidence type="ECO:0000269" key="3">
    <source>
    </source>
</evidence>
<evidence type="ECO:0000305" key="4"/>
<organismHost>
    <name type="scientific">Bos indicus</name>
    <name type="common">Zebu</name>
    <dbReference type="NCBI Taxonomy" id="9915"/>
</organismHost>
<organismHost>
    <name type="scientific">Bos taurus</name>
    <name type="common">Bovine</name>
    <dbReference type="NCBI Taxonomy" id="9913"/>
</organismHost>
<organismHost>
    <name type="scientific">Bubalus bubalis</name>
    <name type="common">Domestic water buffalo</name>
    <dbReference type="NCBI Taxonomy" id="89462"/>
</organismHost>
<organismHost>
    <name type="scientific">Capra hircus</name>
    <name type="common">Goat</name>
    <dbReference type="NCBI Taxonomy" id="9925"/>
</organismHost>
<organismHost>
    <name type="scientific">Gazella</name>
    <name type="common">gazelles</name>
    <dbReference type="NCBI Taxonomy" id="9933"/>
</organismHost>
<organismHost>
    <name type="scientific">Giraffa camelopardalis</name>
    <name type="common">Giraffe</name>
    <dbReference type="NCBI Taxonomy" id="9894"/>
</organismHost>
<organismHost>
    <name type="scientific">Hippopotamus</name>
    <dbReference type="NCBI Taxonomy" id="9832"/>
</organismHost>
<organismHost>
    <name type="scientific">Ovis aries</name>
    <name type="common">Sheep</name>
    <dbReference type="NCBI Taxonomy" id="9940"/>
</organismHost>
<organismHost>
    <name type="scientific">Suidae</name>
    <name type="common">pigs</name>
    <dbReference type="NCBI Taxonomy" id="9821"/>
</organismHost>
<comment type="function">
    <text evidence="1 3">Attaches the virus to cell receptors and thereby initiating infection. Binding of H protein to the receptor induces a conformational change that allows the F protein to trigger virion/cell membranes fusion (By similarity). Down-regulates human MCP/CD46 cell surface expression.</text>
</comment>
<comment type="subcellular location">
    <subcellularLocation>
        <location evidence="4">Virion membrane</location>
        <topology evidence="4">Single-pass type II membrane protein</topology>
    </subcellularLocation>
    <subcellularLocation>
        <location>Host membrane</location>
        <topology>Single-pass type II membrane protein</topology>
    </subcellularLocation>
</comment>
<comment type="similarity">
    <text evidence="4">Belongs to the paramyxoviruses hemagglutinin-neuraminidase family. Non-sialidase subfamily.</text>
</comment>
<comment type="caution">
    <text evidence="4">Morbiliviruses hemagglutinins have no neuraminidase activity.</text>
</comment>
<name>HEMA_RINDK</name>
<sequence>MSPPRDRVDAYYKDNFQFKNTRVVLNKEQLLIERPCMLLTVLFVMFLSLVGLLAIAGIRLHRAAVNTAKINNDLTTSIDITKSIEYQVKDVLTPLFKIIGDEVGLRTPQRFTDLTKFISDKIKFLNPDKEYDFRDINWCINPPERIKIDYDQYCAHTAAEDLITMLVNSSLTGTTVLRTSLVNLRRNCTGPTTTKGQFSNISLTLSGIYSGRGYNISSMITITGKGMYGSTYLVGKYNQRARRPSIVWQQDYRVFEVGIIRELGVGTPVFHMTNYLELPRQPELETCMLALGESKLAALCLADSPVALHYGRVGDDNKIRFVKLGVWASPADRDTLATLSAIDPTLDGLYITTHRGIIAAGTAIWAVPVTRTDDQVKMGKCRLEACRDRPPPFCNSTDWEPLEAGRIPAYGVLTIKLGLADEPKVDIISEFGPLITHDSGMDLYTSFDGTKYWLTTPPLQNSALGTVNTLVLEPSLKISPNILTLPIRSGGGDCYTPTYLSDRADDDVKLSSNLVILPSRDLQYVSATYDISRVEHAIVYHIYSTGRLSSYYYPFKLPIKGDPVSLQIECFPWDRKLWCHHFCSVIDSGTGEQVTHIGVVGIKITCNGK</sequence>
<reference key="1">
    <citation type="journal article" date="1988" name="Virology">
        <title>Cloning and sequence analysis of the hemagglutinin gene of the virulent strain of rinderpest virus.</title>
        <authorList>
            <person name="Yamanaka M."/>
            <person name="Hsu D."/>
            <person name="Crisp T."/>
            <person name="Dale B."/>
            <person name="Grubman M."/>
            <person name="Yilma T."/>
        </authorList>
    </citation>
    <scope>NUCLEOTIDE SEQUENCE [GENOMIC RNA]</scope>
</reference>
<reference key="2">
    <citation type="journal article" date="1998" name="J. Virol.">
        <title>Morbillivirus downregulation of CD46.</title>
        <authorList>
            <person name="Galbraith S.E."/>
            <person name="Tiwari A."/>
            <person name="Baron M.D."/>
            <person name="Lund B.T."/>
            <person name="Barrett T."/>
            <person name="Cosby S.L."/>
        </authorList>
    </citation>
    <scope>FUNCTION</scope>
</reference>
<keyword id="KW-0325">Glycoprotein</keyword>
<keyword id="KW-0348">Hemagglutinin</keyword>
<keyword id="KW-1043">Host membrane</keyword>
<keyword id="KW-0945">Host-virus interaction</keyword>
<keyword id="KW-0472">Membrane</keyword>
<keyword id="KW-0735">Signal-anchor</keyword>
<keyword id="KW-0812">Transmembrane</keyword>
<keyword id="KW-1133">Transmembrane helix</keyword>
<keyword id="KW-1161">Viral attachment to host cell</keyword>
<keyword id="KW-0261">Viral envelope protein</keyword>
<keyword id="KW-0946">Virion</keyword>
<keyword id="KW-1160">Virus entry into host cell</keyword>
<protein>
    <recommendedName>
        <fullName>Hemagglutinin glycoprotein</fullName>
    </recommendedName>
</protein>
<dbReference type="EMBL" id="M21513">
    <property type="protein sequence ID" value="AAA47401.1"/>
    <property type="molecule type" value="Genomic_RNA"/>
</dbReference>
<dbReference type="PIR" id="A31053">
    <property type="entry name" value="HMNZKA"/>
</dbReference>
<dbReference type="SMR" id="P12567"/>
<dbReference type="GlyCosmos" id="P12567">
    <property type="glycosylation" value="5 sites, No reported glycans"/>
</dbReference>
<dbReference type="GO" id="GO:0033644">
    <property type="term" value="C:host cell membrane"/>
    <property type="evidence" value="ECO:0007669"/>
    <property type="project" value="UniProtKB-SubCell"/>
</dbReference>
<dbReference type="GO" id="GO:0016020">
    <property type="term" value="C:membrane"/>
    <property type="evidence" value="ECO:0007669"/>
    <property type="project" value="UniProtKB-KW"/>
</dbReference>
<dbReference type="GO" id="GO:0019031">
    <property type="term" value="C:viral envelope"/>
    <property type="evidence" value="ECO:0007669"/>
    <property type="project" value="UniProtKB-KW"/>
</dbReference>
<dbReference type="GO" id="GO:0055036">
    <property type="term" value="C:virion membrane"/>
    <property type="evidence" value="ECO:0007669"/>
    <property type="project" value="UniProtKB-SubCell"/>
</dbReference>
<dbReference type="GO" id="GO:0046789">
    <property type="term" value="F:host cell surface receptor binding"/>
    <property type="evidence" value="ECO:0007669"/>
    <property type="project" value="InterPro"/>
</dbReference>
<dbReference type="GO" id="GO:0046718">
    <property type="term" value="P:symbiont entry into host cell"/>
    <property type="evidence" value="ECO:0007669"/>
    <property type="project" value="UniProtKB-KW"/>
</dbReference>
<dbReference type="GO" id="GO:0019062">
    <property type="term" value="P:virion attachment to host cell"/>
    <property type="evidence" value="ECO:0007669"/>
    <property type="project" value="UniProtKB-KW"/>
</dbReference>
<dbReference type="CDD" id="cd15467">
    <property type="entry name" value="MV-h"/>
    <property type="match status" value="1"/>
</dbReference>
<dbReference type="Gene3D" id="2.120.10.10">
    <property type="match status" value="1"/>
</dbReference>
<dbReference type="InterPro" id="IPR000665">
    <property type="entry name" value="Hemagglutn/HN"/>
</dbReference>
<dbReference type="InterPro" id="IPR049617">
    <property type="entry name" value="MV-h_C"/>
</dbReference>
<dbReference type="InterPro" id="IPR036278">
    <property type="entry name" value="Sialidase_sf"/>
</dbReference>
<dbReference type="Pfam" id="PF00423">
    <property type="entry name" value="HN"/>
    <property type="match status" value="1"/>
</dbReference>
<dbReference type="SUPFAM" id="SSF50939">
    <property type="entry name" value="Sialidases"/>
    <property type="match status" value="1"/>
</dbReference>